<accession>P0DOJ5</accession>
<accession>P03074</accession>
<accession>Q76TX5</accession>
<accession>Q76W02</accession>
<accession>Q89471</accession>
<proteinExistence type="evidence at protein level"/>
<feature type="chain" id="PRO_0000442782" description="Large T antigen">
    <location>
        <begin position="1"/>
        <end position="782"/>
    </location>
</feature>
<feature type="domain" description="J">
    <location>
        <begin position="12"/>
        <end position="75"/>
    </location>
</feature>
<feature type="domain" description="SF3 helicase" evidence="2">
    <location>
        <begin position="549"/>
        <end position="709"/>
    </location>
</feature>
<feature type="DNA-binding region" description="T-ag OBD" evidence="3">
    <location>
        <begin position="293"/>
        <end position="407"/>
    </location>
</feature>
<feature type="zinc finger region" description="T-ag D1-type" evidence="4">
    <location>
        <begin position="416"/>
        <end position="510"/>
    </location>
</feature>
<feature type="region of interest" description="Disordered" evidence="5">
    <location>
        <begin position="74"/>
        <end position="97"/>
    </location>
</feature>
<feature type="region of interest" description="Disordered" evidence="5">
    <location>
        <begin position="145"/>
        <end position="291"/>
    </location>
</feature>
<feature type="short sequence motif" description="LXCXE motif" evidence="1">
    <location>
        <begin position="142"/>
        <end position="146"/>
    </location>
</feature>
<feature type="short sequence motif" description="Nuclear localization signal" evidence="1">
    <location>
        <begin position="279"/>
        <end position="286"/>
    </location>
</feature>
<feature type="compositionally biased region" description="Basic and acidic residues" evidence="5">
    <location>
        <begin position="85"/>
        <end position="97"/>
    </location>
</feature>
<feature type="compositionally biased region" description="Low complexity" evidence="5">
    <location>
        <begin position="148"/>
        <end position="161"/>
    </location>
</feature>
<feature type="compositionally biased region" description="Gly residues" evidence="5">
    <location>
        <begin position="199"/>
        <end position="209"/>
    </location>
</feature>
<feature type="compositionally biased region" description="Low complexity" evidence="5">
    <location>
        <begin position="233"/>
        <end position="247"/>
    </location>
</feature>
<feature type="compositionally biased region" description="Low complexity" evidence="5">
    <location>
        <begin position="264"/>
        <end position="274"/>
    </location>
</feature>
<feature type="binding site" evidence="4">
    <location>
        <position position="453"/>
    </location>
    <ligand>
        <name>Zn(2+)</name>
        <dbReference type="ChEBI" id="CHEBI:29105"/>
    </ligand>
</feature>
<feature type="binding site" evidence="4">
    <location>
        <position position="456"/>
    </location>
    <ligand>
        <name>Zn(2+)</name>
        <dbReference type="ChEBI" id="CHEBI:29105"/>
    </ligand>
</feature>
<feature type="binding site" evidence="4">
    <location>
        <position position="466"/>
    </location>
    <ligand>
        <name>Zn(2+)</name>
        <dbReference type="ChEBI" id="CHEBI:29105"/>
    </ligand>
</feature>
<feature type="binding site" evidence="4">
    <location>
        <position position="470"/>
    </location>
    <ligand>
        <name>Zn(2+)</name>
        <dbReference type="ChEBI" id="CHEBI:29105"/>
    </ligand>
</feature>
<feature type="binding site" evidence="2">
    <location>
        <begin position="575"/>
        <end position="582"/>
    </location>
    <ligand>
        <name>ATP</name>
        <dbReference type="ChEBI" id="CHEBI:30616"/>
    </ligand>
</feature>
<feature type="modified residue" description="N-acetylmethionine; by host" evidence="1">
    <location>
        <position position="1"/>
    </location>
</feature>
<feature type="modified residue" description="Phosphothreonine; by host" evidence="1">
    <location>
        <position position="278"/>
    </location>
</feature>
<feature type="helix" evidence="7">
    <location>
        <begin position="7"/>
        <end position="17"/>
    </location>
</feature>
<feature type="strand" evidence="7">
    <location>
        <begin position="21"/>
        <end position="23"/>
    </location>
</feature>
<feature type="helix" evidence="7">
    <location>
        <begin position="27"/>
        <end position="40"/>
    </location>
</feature>
<feature type="helix" evidence="7">
    <location>
        <begin position="43"/>
        <end position="45"/>
    </location>
</feature>
<feature type="helix" evidence="7">
    <location>
        <begin position="49"/>
        <end position="69"/>
    </location>
</feature>
<name>LT_POVM3</name>
<sequence length="782" mass="87662">MDRVLSRADKERLLELLKLPRQLWGDFGRMQQAYKQQSLLLHPDKGGSHALMQELNSLWGTFKTEVYNLRMNLGGTGFQGSPPRTAERGTEESGHSPLHDDYWSFSYGSKYFTREWNDFFRKWDPSYQSPPKTAESSEQPDLFCYEEPLLSPNPSSPTDTPAHTAGRRRNPCVAEPDDSISPDPPRTPVSRKRPRPAGATGGGGGGVHANGGSVFGHPTGGTSTPAHPPPYHSQGGSESMGGSDSSGFAEGSFRSDPRCESENESYSQSCSQSSFNATPPKKAREDPAPSDFPSSLTGYLSHAIYSNKTFPAFLVYSTKEKCKQLYDTIGKFRPEFKCLVHYEEGGMLFFLTMTKHRVSAVKNYCSKLCSVSFLMCKAVTKPMECYQVVTAAPFQLITENKPGLHQFEFTDEPEEQKAVDWIMVADFALENNLDDPLLIMGYYLDFAKEVPSCIKCSKEETRLQIHWKNHRKHAENADLFLNCKAQKTICQQAADGVLASRRLKLVECTRSQLLKERLQQSLLRLKELGSSDALLYLAGVAWYQCLLEDFPQTLFKMLKLLTENVPKRRNILFRGPVNSGKTGLAAALISLLGGKSLNINCPADKLAFELGVAQDQFVVCFEDVKGQIALNKQLQPGMGVANLDNLRDYLDGSVKVNLEKKHSNKRSQLFPPCVCTMNEYLLPQTVWARFHMVLDFTCKPHLAQSLEKCEFLQRERIIQSGDTLALLLIWNFTSDVFDPDIQGLVKEVRDQFASECSYSLFCDILCNVQEGDDPLKDICEYS</sequence>
<keyword id="KW-0002">3D-structure</keyword>
<keyword id="KW-0007">Acetylation</keyword>
<keyword id="KW-0025">Alternative splicing</keyword>
<keyword id="KW-0067">ATP-binding</keyword>
<keyword id="KW-0235">DNA replication</keyword>
<keyword id="KW-0238">DNA-binding</keyword>
<keyword id="KW-0244">Early protein</keyword>
<keyword id="KW-1078">G1/S host cell cycle checkpoint dysregulation by virus</keyword>
<keyword id="KW-0347">Helicase</keyword>
<keyword id="KW-1048">Host nucleus</keyword>
<keyword id="KW-0945">Host-virus interaction</keyword>
<keyword id="KW-0378">Hydrolase</keyword>
<keyword id="KW-1090">Inhibition of host innate immune response by virus</keyword>
<keyword id="KW-1114">Inhibition of host interferon signaling pathway by virus</keyword>
<keyword id="KW-1096">Inhibition of host JAK1 by virus</keyword>
<keyword id="KW-0922">Interferon antiviral system evasion</keyword>
<keyword id="KW-0413">Isomerase</keyword>
<keyword id="KW-0460">Magnesium</keyword>
<keyword id="KW-0479">Metal-binding</keyword>
<keyword id="KW-1121">Modulation of host cell cycle by virus</keyword>
<keyword id="KW-0547">Nucleotide-binding</keyword>
<keyword id="KW-0553">Oncogene</keyword>
<keyword id="KW-0597">Phosphoprotein</keyword>
<keyword id="KW-0899">Viral immunoevasion</keyword>
<keyword id="KW-0862">Zinc</keyword>
<keyword id="KW-0863">Zinc-finger</keyword>
<evidence type="ECO:0000250" key="1">
    <source>
        <dbReference type="UniProtKB" id="P03070"/>
    </source>
</evidence>
<evidence type="ECO:0000255" key="2">
    <source>
        <dbReference type="PROSITE-ProRule" id="PRU00551"/>
    </source>
</evidence>
<evidence type="ECO:0000255" key="3">
    <source>
        <dbReference type="PROSITE-ProRule" id="PRU00620"/>
    </source>
</evidence>
<evidence type="ECO:0000255" key="4">
    <source>
        <dbReference type="PROSITE-ProRule" id="PRU00671"/>
    </source>
</evidence>
<evidence type="ECO:0000256" key="5">
    <source>
        <dbReference type="SAM" id="MobiDB-lite"/>
    </source>
</evidence>
<evidence type="ECO:0000305" key="6"/>
<evidence type="ECO:0007829" key="7">
    <source>
        <dbReference type="PDB" id="1FAF"/>
    </source>
</evidence>
<protein>
    <recommendedName>
        <fullName>Large T antigen</fullName>
        <shortName>LT</shortName>
        <shortName>LT-AG</shortName>
        <ecNumber evidence="1">5.6.2.4</ecNumber>
    </recommendedName>
    <alternativeName>
        <fullName evidence="6">DNA 3'-5' helicase large T antigen</fullName>
    </alternativeName>
</protein>
<organism>
    <name type="scientific">Murine polyomavirus (strain A3)</name>
    <name type="common">MPyV</name>
    <dbReference type="NCBI Taxonomy" id="157703"/>
    <lineage>
        <taxon>Viruses</taxon>
        <taxon>Monodnaviria</taxon>
        <taxon>Shotokuvirae</taxon>
        <taxon>Cossaviricota</taxon>
        <taxon>Papovaviricetes</taxon>
        <taxon>Sepolyvirales</taxon>
        <taxon>Polyomaviridae</taxon>
        <taxon>Alphapolyomavirus</taxon>
        <taxon>Mus musculus polyomavirus 1</taxon>
    </lineage>
</organism>
<dbReference type="EC" id="5.6.2.4" evidence="1"/>
<dbReference type="EMBL" id="J02289">
    <property type="protein sequence ID" value="AAA46872.1"/>
    <property type="molecule type" value="Genomic_DNA"/>
</dbReference>
<dbReference type="PDB" id="1FAF">
    <property type="method" value="NMR"/>
    <property type="chains" value="A=1-79"/>
</dbReference>
<dbReference type="PDBsum" id="1FAF"/>
<dbReference type="SMR" id="P0DOJ5"/>
<dbReference type="Proteomes" id="UP000006847">
    <property type="component" value="Genome"/>
</dbReference>
<dbReference type="GO" id="GO:0042025">
    <property type="term" value="C:host cell nucleus"/>
    <property type="evidence" value="ECO:0007669"/>
    <property type="project" value="UniProtKB-SubCell"/>
</dbReference>
<dbReference type="GO" id="GO:0005524">
    <property type="term" value="F:ATP binding"/>
    <property type="evidence" value="ECO:0007669"/>
    <property type="project" value="UniProtKB-KW"/>
</dbReference>
<dbReference type="GO" id="GO:0016887">
    <property type="term" value="F:ATP hydrolysis activity"/>
    <property type="evidence" value="ECO:0007669"/>
    <property type="project" value="RHEA"/>
</dbReference>
<dbReference type="GO" id="GO:0003688">
    <property type="term" value="F:DNA replication origin binding"/>
    <property type="evidence" value="ECO:0007669"/>
    <property type="project" value="InterPro"/>
</dbReference>
<dbReference type="GO" id="GO:0004386">
    <property type="term" value="F:helicase activity"/>
    <property type="evidence" value="ECO:0007669"/>
    <property type="project" value="UniProtKB-KW"/>
</dbReference>
<dbReference type="GO" id="GO:0008270">
    <property type="term" value="F:zinc ion binding"/>
    <property type="evidence" value="ECO:0007669"/>
    <property type="project" value="UniProtKB-KW"/>
</dbReference>
<dbReference type="GO" id="GO:0006260">
    <property type="term" value="P:DNA replication"/>
    <property type="evidence" value="ECO:0007669"/>
    <property type="project" value="UniProtKB-KW"/>
</dbReference>
<dbReference type="GO" id="GO:0039645">
    <property type="term" value="P:symbiont-mediated perturbation of host cell cycle G1/S transition checkpoint"/>
    <property type="evidence" value="ECO:0007669"/>
    <property type="project" value="UniProtKB-KW"/>
</dbReference>
<dbReference type="GO" id="GO:0052170">
    <property type="term" value="P:symbiont-mediated suppression of host innate immune response"/>
    <property type="evidence" value="ECO:0007669"/>
    <property type="project" value="UniProtKB-KW"/>
</dbReference>
<dbReference type="GO" id="GO:0039576">
    <property type="term" value="P:symbiont-mediated suppression of host JAK-STAT cascade via inhibition of JAK1 activity"/>
    <property type="evidence" value="ECO:0007669"/>
    <property type="project" value="UniProtKB-KW"/>
</dbReference>
<dbReference type="GO" id="GO:0039502">
    <property type="term" value="P:symbiont-mediated suppression of host type I interferon-mediated signaling pathway"/>
    <property type="evidence" value="ECO:0007669"/>
    <property type="project" value="UniProtKB-KW"/>
</dbReference>
<dbReference type="Gene3D" id="3.40.1310.20">
    <property type="match status" value="1"/>
</dbReference>
<dbReference type="Gene3D" id="1.10.287.110">
    <property type="entry name" value="DnaJ domain"/>
    <property type="match status" value="1"/>
</dbReference>
<dbReference type="Gene3D" id="1.20.1050.70">
    <property type="entry name" value="Large T antigen, SV40, domain 3"/>
    <property type="match status" value="1"/>
</dbReference>
<dbReference type="Gene3D" id="3.40.50.300">
    <property type="entry name" value="P-loop containing nucleotide triphosphate hydrolases"/>
    <property type="match status" value="1"/>
</dbReference>
<dbReference type="Gene3D" id="1.10.10.510">
    <property type="entry name" value="Zinc finger, large T-antigen D1 domain"/>
    <property type="match status" value="1"/>
</dbReference>
<dbReference type="InterPro" id="IPR001623">
    <property type="entry name" value="DnaJ_domain"/>
</dbReference>
<dbReference type="InterPro" id="IPR014015">
    <property type="entry name" value="Helicase_SF3_DNA-vir"/>
</dbReference>
<dbReference type="InterPro" id="IPR036869">
    <property type="entry name" value="J_dom_sf"/>
</dbReference>
<dbReference type="InterPro" id="IPR010932">
    <property type="entry name" value="Lg_T_Ag_Polyomavir_C"/>
</dbReference>
<dbReference type="InterPro" id="IPR027417">
    <property type="entry name" value="P-loop_NTPase"/>
</dbReference>
<dbReference type="InterPro" id="IPR003133">
    <property type="entry name" value="T_Ag_DNA-bd"/>
</dbReference>
<dbReference type="InterPro" id="IPR017910">
    <property type="entry name" value="Znf_lg_T-Ag_D1-typ"/>
</dbReference>
<dbReference type="InterPro" id="IPR037102">
    <property type="entry name" value="Znf_lg_T-Ag_D1_dom_sf"/>
</dbReference>
<dbReference type="Pfam" id="PF06431">
    <property type="entry name" value="Polyoma_lg_T_C"/>
    <property type="match status" value="1"/>
</dbReference>
<dbReference type="Pfam" id="PF02217">
    <property type="entry name" value="T_Ag_DNA_bind"/>
    <property type="match status" value="1"/>
</dbReference>
<dbReference type="SMART" id="SM00271">
    <property type="entry name" value="DnaJ"/>
    <property type="match status" value="1"/>
</dbReference>
<dbReference type="SUPFAM" id="SSF46565">
    <property type="entry name" value="Chaperone J-domain"/>
    <property type="match status" value="1"/>
</dbReference>
<dbReference type="SUPFAM" id="SSF55464">
    <property type="entry name" value="Origin of replication-binding domain, RBD-like"/>
    <property type="match status" value="1"/>
</dbReference>
<dbReference type="SUPFAM" id="SSF52540">
    <property type="entry name" value="P-loop containing nucleoside triphosphate hydrolases"/>
    <property type="match status" value="1"/>
</dbReference>
<dbReference type="PROSITE" id="PS51206">
    <property type="entry name" value="SF3_HELICASE_1"/>
    <property type="match status" value="1"/>
</dbReference>
<dbReference type="PROSITE" id="PS51287">
    <property type="entry name" value="T_AG_OBD"/>
    <property type="match status" value="1"/>
</dbReference>
<dbReference type="PROSITE" id="PS51341">
    <property type="entry name" value="ZF_LTAG_D1"/>
    <property type="match status" value="1"/>
</dbReference>
<comment type="function">
    <text evidence="1">Isoform large T antigen is a key early protein essential for both driving viral replication and inducing cellular transformation. Plays a role in viral genome replication by driving entry of quiescent cells into the cell cycle and by autoregulating the synthesis of viral early mRNA. Displays highly oncogenic activities by corrupting the host cellular checkpoint mechanisms that guard cell division and the transcription, replication, and repair of DNA. Participates in the modulation of cellular gene expression preceeding viral DNA replication. This step involves binding to host key cell cycle regulators retinoblastoma protein RB1/pRb and TP53. Induces the disassembly of host E2F1 transcription factors from RB1, thus promoting transcriptional activation of E2F1-regulated S-phase genes. Inhibits host TP53 binding to DNA, abrogating the ability of TP53 to stimulate gene expression. Plays the role of a TFIID-associated factor (TAF) in transcription initiation for all three RNA polymerases, by stabilizing the TBP-TFIIA complex on promoters. Initiates viral DNA replication and unwinding via interactions with the viral origin of replication. Binds two adjacent sites in the SV40 origin. The replication fork movement is facilitated by Large T antigen helicase activity. Has processive 3'-5' DNA helicase activity which requires a short 3' single-stranded region and ATP. Activates the transcription of viral late mRNA, through host TBP and TFIIA stabilization. Interferes with histone deacetylation mediated by HDAC1, leading to activation of transcription.</text>
</comment>
<comment type="catalytic activity">
    <reaction evidence="1">
        <text>Couples ATP hydrolysis with the unwinding of duplex DNA by translocating in the 3'-5' direction.</text>
        <dbReference type="EC" id="5.6.2.4"/>
    </reaction>
</comment>
<comment type="catalytic activity">
    <reaction evidence="1">
        <text>ATP + H2O = ADP + phosphate + H(+)</text>
        <dbReference type="Rhea" id="RHEA:13065"/>
        <dbReference type="ChEBI" id="CHEBI:15377"/>
        <dbReference type="ChEBI" id="CHEBI:15378"/>
        <dbReference type="ChEBI" id="CHEBI:30616"/>
        <dbReference type="ChEBI" id="CHEBI:43474"/>
        <dbReference type="ChEBI" id="CHEBI:456216"/>
        <dbReference type="EC" id="5.6.2.4"/>
    </reaction>
</comment>
<comment type="cofactor">
    <cofactor evidence="1">
        <name>Mg(2+)</name>
        <dbReference type="ChEBI" id="CHEBI:18420"/>
    </cofactor>
    <text evidence="1">DNA helicase activity requires Mg(2+).</text>
</comment>
<comment type="subunit">
    <text evidence="1">Forms homohexamers in the presence of ATP. Interacts with host HDAC1. Interacts (via LXCXE domain) with host RB1; the interaction induces the aberrant dissociation of RB1-E2F1 complex thereby disrupting RB1's activity. Interacts (via LXCXE domain) with host pRB-related proteins RBL1 and RBL2. Interacts (via C-terminus) with host TOP1 and POLA1 allowing DNA replication. Interacts with host preinitiation complex components TBP, TFIIA and TFIID to regulate transcription initiation.</text>
</comment>
<comment type="subcellular location">
    <subcellularLocation>
        <location evidence="1">Host nucleus</location>
    </subcellularLocation>
</comment>
<comment type="alternative products">
    <event type="alternative splicing"/>
    <isoform>
        <id>P0DOJ5-1</id>
        <id>P03074-1</id>
        <name>Large T antigen</name>
        <sequence type="displayed"/>
    </isoform>
    <isoform>
        <id>P0DOJ8-1</id>
        <id>P03076-1</id>
        <name>Middle T antigen</name>
        <sequence type="external"/>
    </isoform>
    <isoform>
        <id>P68834-1</id>
        <name>Small t antigen</name>
        <sequence type="external"/>
    </isoform>
</comment>
<comment type="domain">
    <text evidence="1">The J domain is essential for multiple viral activities, including virion assembly, viral DNA replication, transformation and transcriptional activation.</text>
</comment>
<comment type="domain">
    <text evidence="1">The LXCXE motif specifically binds to host pRB, RBL1, and RBL2.</text>
</comment>
<comment type="domain">
    <text evidence="1">The zinc finger region contributes to protein-protein interactions essential for the assembly of stable T-antigen hexamers at the origin of replication. The hexamers are required for subsequent alterations in the structure of origin DNA.</text>
</comment>
<comment type="domain">
    <text evidence="1">The ATP binding/ATPase domain is required for proper hexamer assembly and helicase activity.</text>
</comment>
<comment type="PTM">
    <text evidence="1">Phosphorylated on both serine and threonine residues. Small t antigen inhibits the dephosphorylation by the AC form of PP2A.</text>
</comment>
<comment type="PTM">
    <text evidence="1">O-Glycosylated near the C-terminal region.</text>
</comment>
<comment type="PTM">
    <text evidence="1">Acetylated by CBP in a TP53-dependent manner.</text>
</comment>
<reference key="1">
    <citation type="journal article" date="1979" name="Cell">
        <title>The nucleotide sequence and genome organization of the polyoma early region: extensive nucleotide and amino acid homology with SV40.</title>
        <authorList>
            <person name="Friedmann T."/>
            <person name="Esty A."/>
            <person name="LaPorte P."/>
            <person name="Deininger P.L."/>
        </authorList>
    </citation>
    <scope>NUCLEOTIDE SEQUENCE [GENOMIC DNA]</scope>
</reference>
<reference key="2">
    <citation type="journal article" date="1980" name="Nucleic Acids Res.">
        <title>The nucleotide sequence and restriction enzyme sites of the polyoma genome.</title>
        <authorList>
            <person name="Deininger P.L."/>
            <person name="Esty A."/>
            <person name="LaPorte P."/>
            <person name="Hsu H."/>
            <person name="Friedmann T."/>
        </authorList>
    </citation>
    <scope>NUCLEOTIDE SEQUENCE [GENOMIC DNA]</scope>
</reference>
<reference key="3">
    <citation type="journal article" date="2000" name="J. Biol. Chem.">
        <title>NMR structure of the N-terminal J domain of murine polyomavirus T antigens. Implications for DnaJ-like domains and for mutations of T antigens.</title>
        <authorList>
            <person name="Berjanskii M.V."/>
            <person name="Riley M.I."/>
            <person name="Xie A."/>
            <person name="Semenchenko V."/>
            <person name="Folk W.R."/>
            <person name="Van Doren S.R."/>
        </authorList>
    </citation>
    <scope>STRUCTURE BY NMR OF 1-79</scope>
</reference>
<organismHost>
    <name type="scientific">Mus musculus</name>
    <name type="common">Mouse</name>
    <dbReference type="NCBI Taxonomy" id="10090"/>
</organismHost>